<feature type="chain" id="PRO_0000354606" description="Large ribosomal subunit protein uL16">
    <location>
        <begin position="1"/>
        <end position="136"/>
    </location>
</feature>
<accession>A8F2E0</accession>
<organism>
    <name type="scientific">Rickettsia massiliae (strain Mtu5)</name>
    <dbReference type="NCBI Taxonomy" id="416276"/>
    <lineage>
        <taxon>Bacteria</taxon>
        <taxon>Pseudomonadati</taxon>
        <taxon>Pseudomonadota</taxon>
        <taxon>Alphaproteobacteria</taxon>
        <taxon>Rickettsiales</taxon>
        <taxon>Rickettsiaceae</taxon>
        <taxon>Rickettsieae</taxon>
        <taxon>Rickettsia</taxon>
        <taxon>spotted fever group</taxon>
    </lineage>
</organism>
<comment type="function">
    <text evidence="1">Binds 23S rRNA and is also seen to make contacts with the A and possibly P site tRNAs.</text>
</comment>
<comment type="subunit">
    <text evidence="1">Part of the 50S ribosomal subunit.</text>
</comment>
<comment type="similarity">
    <text evidence="1">Belongs to the universal ribosomal protein uL16 family.</text>
</comment>
<comment type="sequence caution" evidence="2">
    <conflict type="erroneous initiation">
        <sequence resource="EMBL-CDS" id="ABV85076"/>
    </conflict>
</comment>
<proteinExistence type="inferred from homology"/>
<dbReference type="EMBL" id="CP000683">
    <property type="protein sequence ID" value="ABV85076.1"/>
    <property type="status" value="ALT_INIT"/>
    <property type="molecule type" value="Genomic_DNA"/>
</dbReference>
<dbReference type="RefSeq" id="WP_014365544.1">
    <property type="nucleotide sequence ID" value="NC_009900.1"/>
</dbReference>
<dbReference type="SMR" id="A8F2E0"/>
<dbReference type="KEGG" id="rms:RMA_1033"/>
<dbReference type="HOGENOM" id="CLU_078858_2_1_5"/>
<dbReference type="Proteomes" id="UP000001311">
    <property type="component" value="Chromosome"/>
</dbReference>
<dbReference type="GO" id="GO:0022625">
    <property type="term" value="C:cytosolic large ribosomal subunit"/>
    <property type="evidence" value="ECO:0007669"/>
    <property type="project" value="TreeGrafter"/>
</dbReference>
<dbReference type="GO" id="GO:0019843">
    <property type="term" value="F:rRNA binding"/>
    <property type="evidence" value="ECO:0007669"/>
    <property type="project" value="UniProtKB-UniRule"/>
</dbReference>
<dbReference type="GO" id="GO:0003735">
    <property type="term" value="F:structural constituent of ribosome"/>
    <property type="evidence" value="ECO:0007669"/>
    <property type="project" value="InterPro"/>
</dbReference>
<dbReference type="GO" id="GO:0000049">
    <property type="term" value="F:tRNA binding"/>
    <property type="evidence" value="ECO:0007669"/>
    <property type="project" value="UniProtKB-KW"/>
</dbReference>
<dbReference type="GO" id="GO:0006412">
    <property type="term" value="P:translation"/>
    <property type="evidence" value="ECO:0007669"/>
    <property type="project" value="UniProtKB-UniRule"/>
</dbReference>
<dbReference type="CDD" id="cd01433">
    <property type="entry name" value="Ribosomal_L16_L10e"/>
    <property type="match status" value="1"/>
</dbReference>
<dbReference type="FunFam" id="3.90.1170.10:FF:000001">
    <property type="entry name" value="50S ribosomal protein L16"/>
    <property type="match status" value="1"/>
</dbReference>
<dbReference type="Gene3D" id="3.90.1170.10">
    <property type="entry name" value="Ribosomal protein L10e/L16"/>
    <property type="match status" value="1"/>
</dbReference>
<dbReference type="HAMAP" id="MF_01342">
    <property type="entry name" value="Ribosomal_uL16"/>
    <property type="match status" value="1"/>
</dbReference>
<dbReference type="InterPro" id="IPR047873">
    <property type="entry name" value="Ribosomal_uL16"/>
</dbReference>
<dbReference type="InterPro" id="IPR000114">
    <property type="entry name" value="Ribosomal_uL16_bact-type"/>
</dbReference>
<dbReference type="InterPro" id="IPR020798">
    <property type="entry name" value="Ribosomal_uL16_CS"/>
</dbReference>
<dbReference type="InterPro" id="IPR016180">
    <property type="entry name" value="Ribosomal_uL16_dom"/>
</dbReference>
<dbReference type="InterPro" id="IPR036920">
    <property type="entry name" value="Ribosomal_uL16_sf"/>
</dbReference>
<dbReference type="NCBIfam" id="TIGR01164">
    <property type="entry name" value="rplP_bact"/>
    <property type="match status" value="1"/>
</dbReference>
<dbReference type="PANTHER" id="PTHR12220">
    <property type="entry name" value="50S/60S RIBOSOMAL PROTEIN L16"/>
    <property type="match status" value="1"/>
</dbReference>
<dbReference type="PANTHER" id="PTHR12220:SF13">
    <property type="entry name" value="LARGE RIBOSOMAL SUBUNIT PROTEIN UL16M"/>
    <property type="match status" value="1"/>
</dbReference>
<dbReference type="Pfam" id="PF00252">
    <property type="entry name" value="Ribosomal_L16"/>
    <property type="match status" value="1"/>
</dbReference>
<dbReference type="PRINTS" id="PR00060">
    <property type="entry name" value="RIBOSOMALL16"/>
</dbReference>
<dbReference type="SUPFAM" id="SSF54686">
    <property type="entry name" value="Ribosomal protein L16p/L10e"/>
    <property type="match status" value="1"/>
</dbReference>
<dbReference type="PROSITE" id="PS00586">
    <property type="entry name" value="RIBOSOMAL_L16_1"/>
    <property type="match status" value="1"/>
</dbReference>
<dbReference type="PROSITE" id="PS00701">
    <property type="entry name" value="RIBOSOMAL_L16_2"/>
    <property type="match status" value="1"/>
</dbReference>
<evidence type="ECO:0000255" key="1">
    <source>
        <dbReference type="HAMAP-Rule" id="MF_01342"/>
    </source>
</evidence>
<evidence type="ECO:0000305" key="2"/>
<gene>
    <name evidence="1" type="primary">rplP</name>
    <name type="ordered locus">RMA_1033</name>
</gene>
<sequence>MLAPKKQKFRKAHKGRVASKAKAGTTLAFGSFGLKSIDGWRVTARQIEAGRKAATRCMKRQGRLWIRIFPDVPVSQKPAEVRMGKGKGSPEFFAVRVSPGRIMFEIEGVEENVALRALELASAKLPVRTRIVRRYE</sequence>
<protein>
    <recommendedName>
        <fullName evidence="1">Large ribosomal subunit protein uL16</fullName>
    </recommendedName>
    <alternativeName>
        <fullName evidence="2">50S ribosomal protein L16</fullName>
    </alternativeName>
</protein>
<name>RL16_RICM5</name>
<keyword id="KW-0687">Ribonucleoprotein</keyword>
<keyword id="KW-0689">Ribosomal protein</keyword>
<keyword id="KW-0694">RNA-binding</keyword>
<keyword id="KW-0699">rRNA-binding</keyword>
<keyword id="KW-0820">tRNA-binding</keyword>
<reference key="1">
    <citation type="journal article" date="2007" name="Genome Res.">
        <title>Lateral gene transfer between obligate intracellular bacteria: evidence from the Rickettsia massiliae genome.</title>
        <authorList>
            <person name="Blanc G."/>
            <person name="Ogata H."/>
            <person name="Robert C."/>
            <person name="Audic S."/>
            <person name="Claverie J.-M."/>
            <person name="Raoult D."/>
        </authorList>
    </citation>
    <scope>NUCLEOTIDE SEQUENCE [LARGE SCALE GENOMIC DNA]</scope>
    <source>
        <strain>Mtu5</strain>
    </source>
</reference>